<dbReference type="EC" id="2.4.2.21" evidence="1"/>
<dbReference type="EMBL" id="AP006841">
    <property type="protein sequence ID" value="BAD49235.1"/>
    <property type="molecule type" value="Genomic_DNA"/>
</dbReference>
<dbReference type="RefSeq" id="WP_011202890.1">
    <property type="nucleotide sequence ID" value="NC_006347.1"/>
</dbReference>
<dbReference type="RefSeq" id="YP_099769.1">
    <property type="nucleotide sequence ID" value="NC_006347.1"/>
</dbReference>
<dbReference type="SMR" id="Q64TE4"/>
<dbReference type="STRING" id="295405.BF2486"/>
<dbReference type="KEGG" id="bfr:BF2486"/>
<dbReference type="PATRIC" id="fig|295405.11.peg.2394"/>
<dbReference type="HOGENOM" id="CLU_002982_0_0_10"/>
<dbReference type="OrthoDB" id="9781491at2"/>
<dbReference type="UniPathway" id="UPA00061">
    <property type="reaction ID" value="UER00516"/>
</dbReference>
<dbReference type="Proteomes" id="UP000002197">
    <property type="component" value="Chromosome"/>
</dbReference>
<dbReference type="GO" id="GO:0008939">
    <property type="term" value="F:nicotinate-nucleotide-dimethylbenzimidazole phosphoribosyltransferase activity"/>
    <property type="evidence" value="ECO:0007669"/>
    <property type="project" value="UniProtKB-UniRule"/>
</dbReference>
<dbReference type="GO" id="GO:0009236">
    <property type="term" value="P:cobalamin biosynthetic process"/>
    <property type="evidence" value="ECO:0007669"/>
    <property type="project" value="UniProtKB-KW"/>
</dbReference>
<dbReference type="CDD" id="cd02439">
    <property type="entry name" value="DMB-PRT_CobT"/>
    <property type="match status" value="1"/>
</dbReference>
<dbReference type="FunFam" id="3.40.50.10210:FF:000001">
    <property type="entry name" value="Nicotinate-nucleotide--dimethylbenzimidazole phosphoribosyltransferase"/>
    <property type="match status" value="1"/>
</dbReference>
<dbReference type="Gene3D" id="1.10.1610.10">
    <property type="match status" value="1"/>
</dbReference>
<dbReference type="Gene3D" id="3.40.50.10210">
    <property type="match status" value="1"/>
</dbReference>
<dbReference type="HAMAP" id="MF_00230">
    <property type="entry name" value="CobT"/>
    <property type="match status" value="1"/>
</dbReference>
<dbReference type="InterPro" id="IPR003200">
    <property type="entry name" value="Nict_dMeBzImd_PRibTrfase"/>
</dbReference>
<dbReference type="InterPro" id="IPR017846">
    <property type="entry name" value="Nict_dMeBzImd_PRibTrfase_bact"/>
</dbReference>
<dbReference type="InterPro" id="IPR023195">
    <property type="entry name" value="Nict_dMeBzImd_PRibTrfase_N"/>
</dbReference>
<dbReference type="InterPro" id="IPR036087">
    <property type="entry name" value="Nict_dMeBzImd_PRibTrfase_sf"/>
</dbReference>
<dbReference type="NCBIfam" id="TIGR03160">
    <property type="entry name" value="cobT_DBIPRT"/>
    <property type="match status" value="1"/>
</dbReference>
<dbReference type="NCBIfam" id="NF000996">
    <property type="entry name" value="PRK00105.1"/>
    <property type="match status" value="1"/>
</dbReference>
<dbReference type="PANTHER" id="PTHR43463">
    <property type="entry name" value="NICOTINATE-NUCLEOTIDE--DIMETHYLBENZIMIDAZOLE PHOSPHORIBOSYLTRANSFERASE"/>
    <property type="match status" value="1"/>
</dbReference>
<dbReference type="PANTHER" id="PTHR43463:SF1">
    <property type="entry name" value="NICOTINATE-NUCLEOTIDE--DIMETHYLBENZIMIDAZOLE PHOSPHORIBOSYLTRANSFERASE"/>
    <property type="match status" value="1"/>
</dbReference>
<dbReference type="Pfam" id="PF02277">
    <property type="entry name" value="DBI_PRT"/>
    <property type="match status" value="1"/>
</dbReference>
<dbReference type="SUPFAM" id="SSF52733">
    <property type="entry name" value="Nicotinate mononucleotide:5,6-dimethylbenzimidazole phosphoribosyltransferase (CobT)"/>
    <property type="match status" value="1"/>
</dbReference>
<reference key="1">
    <citation type="journal article" date="2004" name="Proc. Natl. Acad. Sci. U.S.A.">
        <title>Genomic analysis of Bacteroides fragilis reveals extensive DNA inversions regulating cell surface adaptation.</title>
        <authorList>
            <person name="Kuwahara T."/>
            <person name="Yamashita A."/>
            <person name="Hirakawa H."/>
            <person name="Nakayama H."/>
            <person name="Toh H."/>
            <person name="Okada N."/>
            <person name="Kuhara S."/>
            <person name="Hattori M."/>
            <person name="Hayashi T."/>
            <person name="Ohnishi Y."/>
        </authorList>
    </citation>
    <scope>NUCLEOTIDE SEQUENCE [LARGE SCALE GENOMIC DNA]</scope>
    <source>
        <strain>YCH46</strain>
    </source>
</reference>
<protein>
    <recommendedName>
        <fullName evidence="1">Nicotinate-nucleotide--dimethylbenzimidazole phosphoribosyltransferase</fullName>
        <shortName evidence="1">NN:DBI PRT</shortName>
        <ecNumber evidence="1">2.4.2.21</ecNumber>
    </recommendedName>
    <alternativeName>
        <fullName evidence="1">N(1)-alpha-phosphoribosyltransferase</fullName>
    </alternativeName>
</protein>
<sequence>MKTFQITRPDETIREALTDKINNLTKPKGSLGTLEELALQIGLIQQTLTPELRHPQNIIFAADHGIVDEGVSLSPKEITWQQISNFLHGGAGVNFLCRQHGFELKIVDAGVDYDLPYEKGIINMKVRKSSRNYLYEAAMTEEEMNLCIERGAEVVRQCHAEGCNVLSLGEMGIGNTSSSSMWMTCFTHIPLELCVGAGSGLDNAGVHHKYNVLQQALDHYQGDGSAHDLIRYFGGLEMVMAIGAMLQAAELKMIILVDGFIMTNCILAASQLYPEVLHYAIFGHQGDEAGHKLVLDAMGAKPLLNLGLRLGEGTGAICSYPIIDSAIRMINEMDNFAHAAITKYF</sequence>
<proteinExistence type="inferred from homology"/>
<feature type="chain" id="PRO_1000021576" description="Nicotinate-nucleotide--dimethylbenzimidazole phosphoribosyltransferase">
    <location>
        <begin position="1"/>
        <end position="345"/>
    </location>
</feature>
<feature type="active site" description="Proton acceptor" evidence="1">
    <location>
        <position position="312"/>
    </location>
</feature>
<accession>Q64TE4</accession>
<keyword id="KW-0169">Cobalamin biosynthesis</keyword>
<keyword id="KW-0328">Glycosyltransferase</keyword>
<keyword id="KW-0808">Transferase</keyword>
<name>COBT_BACFR</name>
<gene>
    <name evidence="1" type="primary">cobT</name>
    <name type="ordered locus">BF2486</name>
</gene>
<evidence type="ECO:0000255" key="1">
    <source>
        <dbReference type="HAMAP-Rule" id="MF_00230"/>
    </source>
</evidence>
<comment type="function">
    <text evidence="1">Catalyzes the synthesis of alpha-ribazole-5'-phosphate from nicotinate mononucleotide (NAMN) and 5,6-dimethylbenzimidazole (DMB).</text>
</comment>
<comment type="catalytic activity">
    <reaction evidence="1">
        <text>5,6-dimethylbenzimidazole + nicotinate beta-D-ribonucleotide = alpha-ribazole 5'-phosphate + nicotinate + H(+)</text>
        <dbReference type="Rhea" id="RHEA:11196"/>
        <dbReference type="ChEBI" id="CHEBI:15378"/>
        <dbReference type="ChEBI" id="CHEBI:15890"/>
        <dbReference type="ChEBI" id="CHEBI:32544"/>
        <dbReference type="ChEBI" id="CHEBI:57502"/>
        <dbReference type="ChEBI" id="CHEBI:57918"/>
        <dbReference type="EC" id="2.4.2.21"/>
    </reaction>
</comment>
<comment type="pathway">
    <text evidence="1">Nucleoside biosynthesis; alpha-ribazole biosynthesis; alpha-ribazole from 5,6-dimethylbenzimidazole: step 1/2.</text>
</comment>
<comment type="similarity">
    <text evidence="1">Belongs to the CobT family.</text>
</comment>
<organism>
    <name type="scientific">Bacteroides fragilis (strain YCH46)</name>
    <dbReference type="NCBI Taxonomy" id="295405"/>
    <lineage>
        <taxon>Bacteria</taxon>
        <taxon>Pseudomonadati</taxon>
        <taxon>Bacteroidota</taxon>
        <taxon>Bacteroidia</taxon>
        <taxon>Bacteroidales</taxon>
        <taxon>Bacteroidaceae</taxon>
        <taxon>Bacteroides</taxon>
    </lineage>
</organism>